<organism>
    <name type="scientific">Xylella fastidiosa (strain M12)</name>
    <dbReference type="NCBI Taxonomy" id="405440"/>
    <lineage>
        <taxon>Bacteria</taxon>
        <taxon>Pseudomonadati</taxon>
        <taxon>Pseudomonadota</taxon>
        <taxon>Gammaproteobacteria</taxon>
        <taxon>Lysobacterales</taxon>
        <taxon>Lysobacteraceae</taxon>
        <taxon>Xylella</taxon>
    </lineage>
</organism>
<comment type="function">
    <text evidence="1">Part of the Tol-Pal system, which plays a role in outer membrane invagination during cell division and is important for maintaining outer membrane integrity.</text>
</comment>
<comment type="subunit">
    <text evidence="1">The Tol-Pal system is composed of five core proteins: the inner membrane proteins TolA, TolQ and TolR, the periplasmic protein TolB and the outer membrane protein Pal. They form a network linking the inner and outer membranes and the peptidoglycan layer.</text>
</comment>
<comment type="subcellular location">
    <subcellularLocation>
        <location evidence="1">Periplasm</location>
    </subcellularLocation>
</comment>
<comment type="similarity">
    <text evidence="1">Belongs to the TolB family.</text>
</comment>
<protein>
    <recommendedName>
        <fullName evidence="1">Tol-Pal system protein TolB</fullName>
    </recommendedName>
</protein>
<proteinExistence type="inferred from homology"/>
<accession>B0U2E8</accession>
<keyword id="KW-0131">Cell cycle</keyword>
<keyword id="KW-0132">Cell division</keyword>
<keyword id="KW-0574">Periplasm</keyword>
<keyword id="KW-0732">Signal</keyword>
<dbReference type="EMBL" id="CP000941">
    <property type="protein sequence ID" value="ACA12027.1"/>
    <property type="molecule type" value="Genomic_DNA"/>
</dbReference>
<dbReference type="RefSeq" id="WP_012337828.1">
    <property type="nucleotide sequence ID" value="NC_010513.1"/>
</dbReference>
<dbReference type="SMR" id="B0U2E8"/>
<dbReference type="KEGG" id="xfm:Xfasm12_1068"/>
<dbReference type="HOGENOM" id="CLU_047123_0_0_6"/>
<dbReference type="GO" id="GO:0042597">
    <property type="term" value="C:periplasmic space"/>
    <property type="evidence" value="ECO:0007669"/>
    <property type="project" value="UniProtKB-SubCell"/>
</dbReference>
<dbReference type="GO" id="GO:0051301">
    <property type="term" value="P:cell division"/>
    <property type="evidence" value="ECO:0007669"/>
    <property type="project" value="UniProtKB-UniRule"/>
</dbReference>
<dbReference type="GO" id="GO:0017038">
    <property type="term" value="P:protein import"/>
    <property type="evidence" value="ECO:0007669"/>
    <property type="project" value="InterPro"/>
</dbReference>
<dbReference type="Gene3D" id="2.120.10.30">
    <property type="entry name" value="TolB, C-terminal domain"/>
    <property type="match status" value="1"/>
</dbReference>
<dbReference type="Gene3D" id="3.40.50.10070">
    <property type="entry name" value="TolB, N-terminal domain"/>
    <property type="match status" value="1"/>
</dbReference>
<dbReference type="HAMAP" id="MF_00671">
    <property type="entry name" value="TolB"/>
    <property type="match status" value="1"/>
</dbReference>
<dbReference type="InterPro" id="IPR011042">
    <property type="entry name" value="6-blade_b-propeller_TolB-like"/>
</dbReference>
<dbReference type="InterPro" id="IPR011659">
    <property type="entry name" value="PD40"/>
</dbReference>
<dbReference type="InterPro" id="IPR014167">
    <property type="entry name" value="Tol-Pal_TolB"/>
</dbReference>
<dbReference type="InterPro" id="IPR007195">
    <property type="entry name" value="TolB_N"/>
</dbReference>
<dbReference type="NCBIfam" id="TIGR02800">
    <property type="entry name" value="propeller_TolB"/>
    <property type="match status" value="1"/>
</dbReference>
<dbReference type="PANTHER" id="PTHR36842:SF1">
    <property type="entry name" value="PROTEIN TOLB"/>
    <property type="match status" value="1"/>
</dbReference>
<dbReference type="PANTHER" id="PTHR36842">
    <property type="entry name" value="PROTEIN TOLB HOMOLOG"/>
    <property type="match status" value="1"/>
</dbReference>
<dbReference type="Pfam" id="PF07676">
    <property type="entry name" value="PD40"/>
    <property type="match status" value="3"/>
</dbReference>
<dbReference type="Pfam" id="PF04052">
    <property type="entry name" value="TolB_N"/>
    <property type="match status" value="1"/>
</dbReference>
<dbReference type="SUPFAM" id="SSF52964">
    <property type="entry name" value="TolB, N-terminal domain"/>
    <property type="match status" value="1"/>
</dbReference>
<dbReference type="SUPFAM" id="SSF69304">
    <property type="entry name" value="Tricorn protease N-terminal domain"/>
    <property type="match status" value="1"/>
</dbReference>
<sequence length="439" mass="47522">MTKFPRWLAILVGLLFPLSALTQQQGLTIDIVGGNTAATPIAVLPMPYHDSAGAPATDVSGVVAADLNRSGQFRTLPLGQITERPTHGSEIRFPTWQALKQDYIVVGRVLDARQGTYRVEYELFDVRNGKRMLGLAMTARASAMRDVAHQMADAIYEKITGLRGAFFTRIAYVTASGSHGAMRYALMVADSDGYNPQTIVRSAEPLLSPDWSPDGKKLAYVSFEKGGSSIYIQDIATGSRELVSSFRGINAAPSFAPDGHRIALSLSRSGNPEIYVMDLVSKQLIQLTNSFGIDTEPVWSSDGKFIYFTSDRGGRPQIYKVASVGGTATRVTFQGNYNATASVSYDDKKIVVAQGSGNVYRIAMMDQSSGSTVWNTLSTGSLDESPSFAPNASMVLYAAREGGRGVLYAVSADARVRQRLVSVDSDVREPAWGPYRSVH</sequence>
<evidence type="ECO:0000255" key="1">
    <source>
        <dbReference type="HAMAP-Rule" id="MF_00671"/>
    </source>
</evidence>
<feature type="signal peptide" evidence="1">
    <location>
        <begin position="1"/>
        <end position="22"/>
    </location>
</feature>
<feature type="chain" id="PRO_5000309314" description="Tol-Pal system protein TolB" evidence="1">
    <location>
        <begin position="23"/>
        <end position="439"/>
    </location>
</feature>
<gene>
    <name evidence="1" type="primary">tolB</name>
    <name type="ordered locus">Xfasm12_1068</name>
</gene>
<name>TOLB_XYLFM</name>
<reference key="1">
    <citation type="journal article" date="2010" name="J. Bacteriol.">
        <title>Whole genome sequences of two Xylella fastidiosa strains (M12 and M23) causing almond leaf scorch disease in California.</title>
        <authorList>
            <person name="Chen J."/>
            <person name="Xie G."/>
            <person name="Han S."/>
            <person name="Chertkov O."/>
            <person name="Sims D."/>
            <person name="Civerolo E.L."/>
        </authorList>
    </citation>
    <scope>NUCLEOTIDE SEQUENCE [LARGE SCALE GENOMIC DNA]</scope>
    <source>
        <strain>M12</strain>
    </source>
</reference>